<comment type="function">
    <text evidence="1">Cell wall formation.</text>
</comment>
<comment type="catalytic activity">
    <reaction evidence="1">
        <text>UDP-N-acetyl-alpha-D-muramate + L-alanine + ATP = UDP-N-acetyl-alpha-D-muramoyl-L-alanine + ADP + phosphate + H(+)</text>
        <dbReference type="Rhea" id="RHEA:23372"/>
        <dbReference type="ChEBI" id="CHEBI:15378"/>
        <dbReference type="ChEBI" id="CHEBI:30616"/>
        <dbReference type="ChEBI" id="CHEBI:43474"/>
        <dbReference type="ChEBI" id="CHEBI:57972"/>
        <dbReference type="ChEBI" id="CHEBI:70757"/>
        <dbReference type="ChEBI" id="CHEBI:83898"/>
        <dbReference type="ChEBI" id="CHEBI:456216"/>
        <dbReference type="EC" id="6.3.2.8"/>
    </reaction>
</comment>
<comment type="pathway">
    <text evidence="1">Cell wall biogenesis; peptidoglycan biosynthesis.</text>
</comment>
<comment type="subcellular location">
    <subcellularLocation>
        <location evidence="1">Cytoplasm</location>
    </subcellularLocation>
</comment>
<comment type="similarity">
    <text evidence="1">Belongs to the MurCDEF family.</text>
</comment>
<evidence type="ECO:0000255" key="1">
    <source>
        <dbReference type="HAMAP-Rule" id="MF_00046"/>
    </source>
</evidence>
<reference key="1">
    <citation type="journal article" date="2008" name="Proc. Natl. Acad. Sci. U.S.A.">
        <title>The genome sequence of Bifidobacterium longum subsp. infantis reveals adaptations for milk utilization within the infant microbiome.</title>
        <authorList>
            <person name="Sela D.A."/>
            <person name="Chapman J."/>
            <person name="Adeuya A."/>
            <person name="Kim J.H."/>
            <person name="Chen F."/>
            <person name="Whitehead T.R."/>
            <person name="Lapidus A."/>
            <person name="Rokhsar D.S."/>
            <person name="Lebrilla C.B."/>
            <person name="German J.B."/>
            <person name="Price N.P."/>
            <person name="Richardson P.M."/>
            <person name="Mills D.A."/>
        </authorList>
    </citation>
    <scope>NUCLEOTIDE SEQUENCE [LARGE SCALE GENOMIC DNA]</scope>
    <source>
        <strain>ATCC 15697 / DSM 20088 / JCM 1222 / NCTC 11817 / S12</strain>
    </source>
</reference>
<reference key="2">
    <citation type="journal article" date="2011" name="Nature">
        <title>Bifidobacteria can protect from enteropathogenic infection through production of acetate.</title>
        <authorList>
            <person name="Fukuda S."/>
            <person name="Toh H."/>
            <person name="Hase K."/>
            <person name="Oshima K."/>
            <person name="Nakanishi Y."/>
            <person name="Yoshimura K."/>
            <person name="Tobe T."/>
            <person name="Clarke J.M."/>
            <person name="Topping D.L."/>
            <person name="Suzuki T."/>
            <person name="Taylor T.D."/>
            <person name="Itoh K."/>
            <person name="Kikuchi J."/>
            <person name="Morita H."/>
            <person name="Hattori M."/>
            <person name="Ohno H."/>
        </authorList>
    </citation>
    <scope>NUCLEOTIDE SEQUENCE [LARGE SCALE GENOMIC DNA]</scope>
    <source>
        <strain>ATCC 15697 / DSM 20088 / JCM 1222 / NCTC 11817 / S12</strain>
    </source>
</reference>
<organism>
    <name type="scientific">Bifidobacterium longum subsp. infantis (strain ATCC 15697 / DSM 20088 / JCM 1222 / NCTC 11817 / S12)</name>
    <dbReference type="NCBI Taxonomy" id="391904"/>
    <lineage>
        <taxon>Bacteria</taxon>
        <taxon>Bacillati</taxon>
        <taxon>Actinomycetota</taxon>
        <taxon>Actinomycetes</taxon>
        <taxon>Bifidobacteriales</taxon>
        <taxon>Bifidobacteriaceae</taxon>
        <taxon>Bifidobacterium</taxon>
    </lineage>
</organism>
<sequence length="512" mass="53449">MSQDQPIVLDPTYASFDAAARPADLGATHFIGIGGAGMSVLAEMLHAEGVSVDGSDRSHSAKTDRLETLGITVEFGQRAENVAQAETVVYSSAIKPDNPEIVAAHAAGKRIVHRSDILALLMNGKRAVTVAGAHGKTTTSSMLSHILVNAGADPSYAIGGFIQGPDGTTLDGGHAGKGDILVAEADESDGSFAKYHPTIAIITNCEADHLDHYGDEAHYRAAFVAHAGRATGHVIISIDDPDGLAVLEAMPADVKSHTVAYGTTARESLPDLGGAAYVWIASESETAGSGVEQLTLHLPAAVTAGEPVSQSVALKVPGVHNARNAAAAISAAVLLGVSPADAAKAAGTFLGAARRFQVRGTVKQVTVVDDYAHHPTEIAALLDAARRRYPDSTIRVIFQPHLFSRTKFFAHQFAESLAKADDVIITGIFPAREKQADFPDISPSTIVDAAAGLKDASAGTWIQPVEDMCLAAKMMAMRAHHGDVIFTVGAGDITDMDQVLLTALEAHRESCE</sequence>
<proteinExistence type="inferred from homology"/>
<protein>
    <recommendedName>
        <fullName evidence="1">UDP-N-acetylmuramate--L-alanine ligase</fullName>
        <ecNumber evidence="1">6.3.2.8</ecNumber>
    </recommendedName>
    <alternativeName>
        <fullName evidence="1">UDP-N-acetylmuramoyl-L-alanine synthetase</fullName>
    </alternativeName>
</protein>
<feature type="chain" id="PRO_1000117393" description="UDP-N-acetylmuramate--L-alanine ligase">
    <location>
        <begin position="1"/>
        <end position="512"/>
    </location>
</feature>
<feature type="binding site" evidence="1">
    <location>
        <begin position="132"/>
        <end position="138"/>
    </location>
    <ligand>
        <name>ATP</name>
        <dbReference type="ChEBI" id="CHEBI:30616"/>
    </ligand>
</feature>
<accession>B7GQ79</accession>
<accession>E8MR41</accession>
<keyword id="KW-0067">ATP-binding</keyword>
<keyword id="KW-0131">Cell cycle</keyword>
<keyword id="KW-0132">Cell division</keyword>
<keyword id="KW-0133">Cell shape</keyword>
<keyword id="KW-0961">Cell wall biogenesis/degradation</keyword>
<keyword id="KW-0963">Cytoplasm</keyword>
<keyword id="KW-0436">Ligase</keyword>
<keyword id="KW-0547">Nucleotide-binding</keyword>
<keyword id="KW-0573">Peptidoglycan synthesis</keyword>
<dbReference type="EC" id="6.3.2.8" evidence="1"/>
<dbReference type="EMBL" id="CP001095">
    <property type="protein sequence ID" value="ACJ51959.1"/>
    <property type="molecule type" value="Genomic_DNA"/>
</dbReference>
<dbReference type="EMBL" id="AP010889">
    <property type="protein sequence ID" value="BAJ68466.1"/>
    <property type="molecule type" value="Genomic_DNA"/>
</dbReference>
<dbReference type="RefSeq" id="WP_012577232.1">
    <property type="nucleotide sequence ID" value="NC_011593.1"/>
</dbReference>
<dbReference type="SMR" id="B7GQ79"/>
<dbReference type="KEGG" id="bln:Blon_0857"/>
<dbReference type="KEGG" id="blon:BLIJ_0874"/>
<dbReference type="PATRIC" id="fig|391904.8.peg.881"/>
<dbReference type="HOGENOM" id="CLU_028104_2_1_11"/>
<dbReference type="UniPathway" id="UPA00219"/>
<dbReference type="Proteomes" id="UP000001360">
    <property type="component" value="Chromosome"/>
</dbReference>
<dbReference type="GO" id="GO:0005737">
    <property type="term" value="C:cytoplasm"/>
    <property type="evidence" value="ECO:0007669"/>
    <property type="project" value="UniProtKB-SubCell"/>
</dbReference>
<dbReference type="GO" id="GO:0005524">
    <property type="term" value="F:ATP binding"/>
    <property type="evidence" value="ECO:0007669"/>
    <property type="project" value="UniProtKB-UniRule"/>
</dbReference>
<dbReference type="GO" id="GO:0008763">
    <property type="term" value="F:UDP-N-acetylmuramate-L-alanine ligase activity"/>
    <property type="evidence" value="ECO:0007669"/>
    <property type="project" value="UniProtKB-UniRule"/>
</dbReference>
<dbReference type="GO" id="GO:0051301">
    <property type="term" value="P:cell division"/>
    <property type="evidence" value="ECO:0007669"/>
    <property type="project" value="UniProtKB-KW"/>
</dbReference>
<dbReference type="GO" id="GO:0071555">
    <property type="term" value="P:cell wall organization"/>
    <property type="evidence" value="ECO:0007669"/>
    <property type="project" value="UniProtKB-KW"/>
</dbReference>
<dbReference type="GO" id="GO:0009252">
    <property type="term" value="P:peptidoglycan biosynthetic process"/>
    <property type="evidence" value="ECO:0007669"/>
    <property type="project" value="UniProtKB-UniRule"/>
</dbReference>
<dbReference type="GO" id="GO:0008360">
    <property type="term" value="P:regulation of cell shape"/>
    <property type="evidence" value="ECO:0007669"/>
    <property type="project" value="UniProtKB-KW"/>
</dbReference>
<dbReference type="Gene3D" id="3.90.190.20">
    <property type="entry name" value="Mur ligase, C-terminal domain"/>
    <property type="match status" value="1"/>
</dbReference>
<dbReference type="Gene3D" id="3.40.1190.10">
    <property type="entry name" value="Mur-like, catalytic domain"/>
    <property type="match status" value="1"/>
</dbReference>
<dbReference type="Gene3D" id="3.40.50.720">
    <property type="entry name" value="NAD(P)-binding Rossmann-like Domain"/>
    <property type="match status" value="1"/>
</dbReference>
<dbReference type="HAMAP" id="MF_00046">
    <property type="entry name" value="MurC"/>
    <property type="match status" value="1"/>
</dbReference>
<dbReference type="InterPro" id="IPR036565">
    <property type="entry name" value="Mur-like_cat_sf"/>
</dbReference>
<dbReference type="InterPro" id="IPR004101">
    <property type="entry name" value="Mur_ligase_C"/>
</dbReference>
<dbReference type="InterPro" id="IPR036615">
    <property type="entry name" value="Mur_ligase_C_dom_sf"/>
</dbReference>
<dbReference type="InterPro" id="IPR013221">
    <property type="entry name" value="Mur_ligase_cen"/>
</dbReference>
<dbReference type="InterPro" id="IPR000713">
    <property type="entry name" value="Mur_ligase_N"/>
</dbReference>
<dbReference type="InterPro" id="IPR050061">
    <property type="entry name" value="MurCDEF_pg_biosynth"/>
</dbReference>
<dbReference type="InterPro" id="IPR005758">
    <property type="entry name" value="UDP-N-AcMur_Ala_ligase_MurC"/>
</dbReference>
<dbReference type="NCBIfam" id="TIGR01082">
    <property type="entry name" value="murC"/>
    <property type="match status" value="1"/>
</dbReference>
<dbReference type="PANTHER" id="PTHR43445:SF3">
    <property type="entry name" value="UDP-N-ACETYLMURAMATE--L-ALANINE LIGASE"/>
    <property type="match status" value="1"/>
</dbReference>
<dbReference type="PANTHER" id="PTHR43445">
    <property type="entry name" value="UDP-N-ACETYLMURAMATE--L-ALANINE LIGASE-RELATED"/>
    <property type="match status" value="1"/>
</dbReference>
<dbReference type="Pfam" id="PF01225">
    <property type="entry name" value="Mur_ligase"/>
    <property type="match status" value="1"/>
</dbReference>
<dbReference type="Pfam" id="PF02875">
    <property type="entry name" value="Mur_ligase_C"/>
    <property type="match status" value="1"/>
</dbReference>
<dbReference type="Pfam" id="PF08245">
    <property type="entry name" value="Mur_ligase_M"/>
    <property type="match status" value="1"/>
</dbReference>
<dbReference type="SUPFAM" id="SSF51984">
    <property type="entry name" value="MurCD N-terminal domain"/>
    <property type="match status" value="1"/>
</dbReference>
<dbReference type="SUPFAM" id="SSF53623">
    <property type="entry name" value="MurD-like peptide ligases, catalytic domain"/>
    <property type="match status" value="1"/>
</dbReference>
<dbReference type="SUPFAM" id="SSF53244">
    <property type="entry name" value="MurD-like peptide ligases, peptide-binding domain"/>
    <property type="match status" value="1"/>
</dbReference>
<name>MURC_BIFLS</name>
<gene>
    <name evidence="1" type="primary">murC</name>
    <name type="ordered locus">Blon_0857</name>
    <name type="ordered locus">BLIJ_0874</name>
</gene>